<evidence type="ECO:0000269" key="1">
    <source>
    </source>
</evidence>
<evidence type="ECO:0000269" key="2">
    <source>
    </source>
</evidence>
<evidence type="ECO:0000303" key="3">
    <source>
    </source>
</evidence>
<evidence type="ECO:0000305" key="4"/>
<evidence type="ECO:0000305" key="5">
    <source>
    </source>
</evidence>
<evidence type="ECO:0000312" key="6">
    <source>
        <dbReference type="EMBL" id="CDM25289.1"/>
    </source>
</evidence>
<keyword id="KW-0963">Cytoplasm</keyword>
<keyword id="KW-0274">FAD</keyword>
<keyword id="KW-0285">Flavoprotein</keyword>
<keyword id="KW-0560">Oxidoreductase</keyword>
<keyword id="KW-1185">Reference proteome</keyword>
<protein>
    <recommendedName>
        <fullName evidence="4">Limonene dehydrogenase subunit B</fullName>
        <ecNumber evidence="2">1.17.99.8</ecNumber>
    </recommendedName>
    <alternativeName>
        <fullName evidence="3">Cyclic terpene metabolism protein B</fullName>
    </alternativeName>
</protein>
<sequence>MSEVKQCDVVVIGAGHNGLTTGAYLARAGAKVLVVERRHETGGALVTEEFSGFRFNLHATYMMMLDVAPPYKDLGLEADGCVYIRPDVAASILKKDGTAVTLHGDLEKSVESIRRISPRDAERFREIYLEYKQMSDEYLIPATYGKPVGSAQLAGTYMETELGKKILEVSELTPYQICQSWGFETPELGALLLYLICMWGIDPTETNSSYLVPLYFNRMLNATLVRGGSHRLSSTLQKAGILAGMEVMENHEVKRIIMEDGAAVGVEVAPTGTDGPLIRIDAKSIVTSTDPTTTFGTFISEEEMQQRSKLCLNTARNWEWEHSSLFLCHLGLRKKPRFKAEDQDPAVQTAFIRVFGVESPEDVVKHFNEVMEGHLLHDIGHVTFTTDLDPNQAPQETEPGSAVARIEAVVPYAPAQGDWADVAGPYGDRLIAKLAEYMVDFDPADIIRRYQYTPVYIEMKIPQMKRGSFKHGAYVMTQMGYSRPNVQCSSNKTPIKGLYVCGASTFPGGMITFGGGYNAAKTVAQDMGLNIWWTEPDEVIAAREKGLLL</sequence>
<organism>
    <name type="scientific">Castellaniella defragrans (strain DSM 12143 / CCUG 39792 / 65Phen)</name>
    <name type="common">Alcaligenes defragrans</name>
    <dbReference type="NCBI Taxonomy" id="1437824"/>
    <lineage>
        <taxon>Bacteria</taxon>
        <taxon>Pseudomonadati</taxon>
        <taxon>Pseudomonadota</taxon>
        <taxon>Betaproteobacteria</taxon>
        <taxon>Burkholderiales</taxon>
        <taxon>Alcaligenaceae</taxon>
        <taxon>Castellaniella</taxon>
    </lineage>
</organism>
<proteinExistence type="evidence at protein level"/>
<gene>
    <name evidence="3" type="primary">ctmB</name>
    <name evidence="6" type="ORF">BN940_14221</name>
</gene>
<feature type="chain" id="PRO_0000459106" description="Limonene dehydrogenase subunit B">
    <location>
        <begin position="1"/>
        <end position="549"/>
    </location>
</feature>
<reference key="1">
    <citation type="journal article" date="2014" name="BMC Microbiol.">
        <title>The oxygen-independent metabolism of cyclic monoterpenes in Castellaniella defragrans 65Phen.</title>
        <authorList>
            <person name="Petasch J."/>
            <person name="Disch E.M."/>
            <person name="Markert S."/>
            <person name="Becher D."/>
            <person name="Schweder T."/>
            <person name="Huttel B."/>
            <person name="Reinhardt R."/>
            <person name="Harder J."/>
        </authorList>
    </citation>
    <scope>NUCLEOTIDE SEQUENCE [LARGE SCALE GENOMIC DNA]</scope>
    <scope>IDENTIFICATION BY MASS SPECTROMETRY</scope>
    <scope>FUNCTION</scope>
    <scope>PATHWAY</scope>
    <scope>INDUCTION</scope>
    <scope>DISRUPTION PHENOTYPE</scope>
    <source>
        <strain>DSM 12143 / CCUG 39792 / 65Phen</strain>
    </source>
</reference>
<reference key="2">
    <citation type="journal article" date="2018" name="J. Biol. Chem.">
        <title>Limonene dehydrogenase hydroxylates the allylic methyl group of cyclic monoterpenes in the anaerobic terpene degradation by Castellaniella defragrans.</title>
        <authorList>
            <person name="Puentes-Cala E."/>
            <person name="Liebeke M."/>
            <person name="Markert S."/>
            <person name="Harder J."/>
        </authorList>
    </citation>
    <scope>FUNCTION</scope>
    <scope>CATALYTIC ACTIVITY</scope>
    <scope>COFACTOR</scope>
    <scope>ACTIVITY REGULATION</scope>
    <scope>BIOPHYSICOCHEMICAL PROPERTIES</scope>
    <scope>PATHWAY</scope>
    <scope>SUBUNIT</scope>
    <scope>IDENTIFICATION BY MASS SPECTROMETRY</scope>
    <source>
        <strain>DSM 12143 / CCUG 39792 / 65Phen</strain>
    </source>
</reference>
<dbReference type="EC" id="1.17.99.8" evidence="2"/>
<dbReference type="EMBL" id="HG916765">
    <property type="protein sequence ID" value="CDM25289.1"/>
    <property type="molecule type" value="Genomic_DNA"/>
</dbReference>
<dbReference type="RefSeq" id="WP_043683942.1">
    <property type="nucleotide sequence ID" value="NZ_HG916765.1"/>
</dbReference>
<dbReference type="SMR" id="W8X092"/>
<dbReference type="STRING" id="1437824.BN940_14221"/>
<dbReference type="KEGG" id="cdn:BN940_14221"/>
<dbReference type="eggNOG" id="COG1233">
    <property type="taxonomic scope" value="Bacteria"/>
</dbReference>
<dbReference type="HOGENOM" id="CLU_019327_0_1_4"/>
<dbReference type="OrthoDB" id="9774675at2"/>
<dbReference type="BioCyc" id="MetaCyc:MONOMER-20671"/>
<dbReference type="BRENDA" id="1.17.99.8">
    <property type="organism ID" value="229"/>
</dbReference>
<dbReference type="UniPathway" id="UPA00137"/>
<dbReference type="Proteomes" id="UP000019805">
    <property type="component" value="Chromosome"/>
</dbReference>
<dbReference type="GO" id="GO:0005737">
    <property type="term" value="C:cytoplasm"/>
    <property type="evidence" value="ECO:0007669"/>
    <property type="project" value="UniProtKB-SubCell"/>
</dbReference>
<dbReference type="GO" id="GO:0016491">
    <property type="term" value="F:oxidoreductase activity"/>
    <property type="evidence" value="ECO:0007669"/>
    <property type="project" value="UniProtKB-KW"/>
</dbReference>
<dbReference type="Gene3D" id="3.50.50.60">
    <property type="entry name" value="FAD/NAD(P)-binding domain"/>
    <property type="match status" value="2"/>
</dbReference>
<dbReference type="InterPro" id="IPR036188">
    <property type="entry name" value="FAD/NAD-bd_sf"/>
</dbReference>
<dbReference type="PANTHER" id="PTHR10668">
    <property type="entry name" value="PHYTOENE DEHYDROGENASE"/>
    <property type="match status" value="1"/>
</dbReference>
<dbReference type="PANTHER" id="PTHR10668:SF103">
    <property type="entry name" value="PYRIDINE NUCLEOTIDE-DISULFIDE OXIDOREDUCTASE DOMAIN-CONTAINING PROTEIN 2"/>
    <property type="match status" value="1"/>
</dbReference>
<dbReference type="Pfam" id="PF13450">
    <property type="entry name" value="NAD_binding_8"/>
    <property type="match status" value="1"/>
</dbReference>
<dbReference type="SUPFAM" id="SSF51905">
    <property type="entry name" value="FAD/NAD(P)-binding domain"/>
    <property type="match status" value="1"/>
</dbReference>
<accession>W8X092</accession>
<name>CTMB_CASD6</name>
<comment type="function">
    <text evidence="1 2 5">Involved in the degradation of the cyclic monoterpene limonene (PubMed:24952578, PubMed:29716998). Catalyzes the oxidation of limonene at the primary methyl group, forming perillyl alcohol (PubMed:29716998). Hydroxylates the R- and S-enantiomers to their respective enantiomeric form of perillyl alcohol at a similar rate (PubMed:29716998). Native CtmAB oxidizes a wide range of monocyclic monoterpenes containing the allylic methyl group motif (1-methyl-cyclohex-1-ene) (PubMed:29716998). Can also catalyze the reverse reaction, the reduction of perillyl alcohol to limonene, but with lower efficiency (PubMed:29716998). Cannot use molecular oxygen as an electron acceptor (PubMed:29716998). The natural electron acceptor is likely a heterodimeric electron transfer flavoprotein (ETF) (Probable).</text>
</comment>
<comment type="catalytic activity">
    <reaction evidence="2">
        <text>(4S)-limonene + A + H2O = (4S)-perillyl alcohol + AH2</text>
        <dbReference type="Rhea" id="RHEA:62564"/>
        <dbReference type="ChEBI" id="CHEBI:10782"/>
        <dbReference type="ChEBI" id="CHEBI:13193"/>
        <dbReference type="ChEBI" id="CHEBI:15377"/>
        <dbReference type="ChEBI" id="CHEBI:15383"/>
        <dbReference type="ChEBI" id="CHEBI:17499"/>
        <dbReference type="EC" id="1.17.99.8"/>
    </reaction>
    <physiologicalReaction direction="left-to-right" evidence="2">
        <dbReference type="Rhea" id="RHEA:62565"/>
    </physiologicalReaction>
</comment>
<comment type="catalytic activity">
    <reaction evidence="2">
        <text>(4R)-limonene + A + H2O = (4R)-perillyl alcohol + AH2</text>
        <dbReference type="Rhea" id="RHEA:62560"/>
        <dbReference type="ChEBI" id="CHEBI:13193"/>
        <dbReference type="ChEBI" id="CHEBI:15377"/>
        <dbReference type="ChEBI" id="CHEBI:15382"/>
        <dbReference type="ChEBI" id="CHEBI:17499"/>
        <dbReference type="ChEBI" id="CHEBI:145806"/>
        <dbReference type="EC" id="1.17.99.8"/>
    </reaction>
    <physiologicalReaction direction="left-to-right" evidence="2">
        <dbReference type="Rhea" id="RHEA:62561"/>
    </physiologicalReaction>
</comment>
<comment type="cofactor">
    <cofactor evidence="2">
        <name>FAD</name>
        <dbReference type="ChEBI" id="CHEBI:57692"/>
    </cofactor>
</comment>
<comment type="activity regulation">
    <text evidence="2">The presence of molecular oxygen causes a 40% reduction in specific activity.</text>
</comment>
<comment type="biophysicochemical properties">
    <kinetics>
        <KM evidence="2">18 uM for limonene (at 28 degrees Celsius)</KM>
        <KM evidence="2">43 uM for limonene (at 40 degrees Celsius)</KM>
        <KM evidence="2">392 uM for perillyl alcohol (at 28 degrees Celsius)</KM>
        <KM evidence="2">487 uM for perillyl alcohol (at 40 degrees Celsius)</KM>
    </kinetics>
    <phDependence>
        <text evidence="2">Optimum pH is 7.5-8.0.</text>
    </phDependence>
    <temperatureDependence>
        <text evidence="2">Optimum temperature is 40 degrees Celsius.</text>
    </temperatureDependence>
</comment>
<comment type="pathway">
    <text evidence="1 2">Terpene metabolism; monoterpene degradation.</text>
</comment>
<comment type="subunit">
    <text evidence="2">Heterodimer composed of CtmA and CtmB.</text>
</comment>
<comment type="subcellular location">
    <subcellularLocation>
        <location evidence="5">Cytoplasm</location>
    </subcellularLocation>
</comment>
<comment type="induction">
    <text evidence="1">By the monoterpene alpha-phellandrene, but not by acetate.</text>
</comment>
<comment type="disruption phenotype">
    <text evidence="1">Mutant cannot not grow aerobically or anaerobically on limonene, but it can grow on perillyl alcohol or on acetate.</text>
</comment>
<comment type="similarity">
    <text evidence="4">Belongs to the carotenoid/retinoid oxidoreductase family.</text>
</comment>